<proteinExistence type="inferred from homology"/>
<gene>
    <name evidence="1" type="primary">bioB</name>
    <name type="ordered locus">ACIAD2045</name>
</gene>
<dbReference type="EC" id="2.8.1.6" evidence="1"/>
<dbReference type="EMBL" id="CR543861">
    <property type="protein sequence ID" value="CAG68864.1"/>
    <property type="status" value="ALT_INIT"/>
    <property type="molecule type" value="Genomic_DNA"/>
</dbReference>
<dbReference type="RefSeq" id="WP_004927463.1">
    <property type="nucleotide sequence ID" value="NC_005966.1"/>
</dbReference>
<dbReference type="SMR" id="Q6FAP9"/>
<dbReference type="STRING" id="202950.GCA_001485005_00329"/>
<dbReference type="GeneID" id="45234399"/>
<dbReference type="KEGG" id="aci:ACIAD2045"/>
<dbReference type="eggNOG" id="COG0502">
    <property type="taxonomic scope" value="Bacteria"/>
</dbReference>
<dbReference type="HOGENOM" id="CLU_033172_1_2_6"/>
<dbReference type="OrthoDB" id="9786826at2"/>
<dbReference type="BioCyc" id="ASP62977:ACIAD_RS09400-MONOMER"/>
<dbReference type="UniPathway" id="UPA00078">
    <property type="reaction ID" value="UER00162"/>
</dbReference>
<dbReference type="Proteomes" id="UP000000430">
    <property type="component" value="Chromosome"/>
</dbReference>
<dbReference type="GO" id="GO:0051537">
    <property type="term" value="F:2 iron, 2 sulfur cluster binding"/>
    <property type="evidence" value="ECO:0007669"/>
    <property type="project" value="UniProtKB-KW"/>
</dbReference>
<dbReference type="GO" id="GO:0051539">
    <property type="term" value="F:4 iron, 4 sulfur cluster binding"/>
    <property type="evidence" value="ECO:0007669"/>
    <property type="project" value="UniProtKB-KW"/>
</dbReference>
<dbReference type="GO" id="GO:0004076">
    <property type="term" value="F:biotin synthase activity"/>
    <property type="evidence" value="ECO:0007669"/>
    <property type="project" value="UniProtKB-UniRule"/>
</dbReference>
<dbReference type="GO" id="GO:0005506">
    <property type="term" value="F:iron ion binding"/>
    <property type="evidence" value="ECO:0007669"/>
    <property type="project" value="UniProtKB-UniRule"/>
</dbReference>
<dbReference type="GO" id="GO:0009102">
    <property type="term" value="P:biotin biosynthetic process"/>
    <property type="evidence" value="ECO:0007669"/>
    <property type="project" value="UniProtKB-UniRule"/>
</dbReference>
<dbReference type="CDD" id="cd01335">
    <property type="entry name" value="Radical_SAM"/>
    <property type="match status" value="1"/>
</dbReference>
<dbReference type="FunFam" id="3.20.20.70:FF:000011">
    <property type="entry name" value="Biotin synthase"/>
    <property type="match status" value="1"/>
</dbReference>
<dbReference type="Gene3D" id="3.20.20.70">
    <property type="entry name" value="Aldolase class I"/>
    <property type="match status" value="1"/>
</dbReference>
<dbReference type="HAMAP" id="MF_01694">
    <property type="entry name" value="BioB"/>
    <property type="match status" value="1"/>
</dbReference>
<dbReference type="InterPro" id="IPR013785">
    <property type="entry name" value="Aldolase_TIM"/>
</dbReference>
<dbReference type="InterPro" id="IPR010722">
    <property type="entry name" value="BATS_dom"/>
</dbReference>
<dbReference type="InterPro" id="IPR002684">
    <property type="entry name" value="Biotin_synth/BioAB"/>
</dbReference>
<dbReference type="InterPro" id="IPR024177">
    <property type="entry name" value="Biotin_synthase"/>
</dbReference>
<dbReference type="InterPro" id="IPR006638">
    <property type="entry name" value="Elp3/MiaA/NifB-like_rSAM"/>
</dbReference>
<dbReference type="InterPro" id="IPR007197">
    <property type="entry name" value="rSAM"/>
</dbReference>
<dbReference type="NCBIfam" id="TIGR00433">
    <property type="entry name" value="bioB"/>
    <property type="match status" value="1"/>
</dbReference>
<dbReference type="PANTHER" id="PTHR22976">
    <property type="entry name" value="BIOTIN SYNTHASE"/>
    <property type="match status" value="1"/>
</dbReference>
<dbReference type="PANTHER" id="PTHR22976:SF2">
    <property type="entry name" value="BIOTIN SYNTHASE, MITOCHONDRIAL"/>
    <property type="match status" value="1"/>
</dbReference>
<dbReference type="Pfam" id="PF06968">
    <property type="entry name" value="BATS"/>
    <property type="match status" value="1"/>
</dbReference>
<dbReference type="Pfam" id="PF04055">
    <property type="entry name" value="Radical_SAM"/>
    <property type="match status" value="1"/>
</dbReference>
<dbReference type="PIRSF" id="PIRSF001619">
    <property type="entry name" value="Biotin_synth"/>
    <property type="match status" value="1"/>
</dbReference>
<dbReference type="SFLD" id="SFLDF00272">
    <property type="entry name" value="biotin_synthase"/>
    <property type="match status" value="1"/>
</dbReference>
<dbReference type="SFLD" id="SFLDG01278">
    <property type="entry name" value="biotin_synthase_like"/>
    <property type="match status" value="1"/>
</dbReference>
<dbReference type="SMART" id="SM00876">
    <property type="entry name" value="BATS"/>
    <property type="match status" value="1"/>
</dbReference>
<dbReference type="SMART" id="SM00729">
    <property type="entry name" value="Elp3"/>
    <property type="match status" value="1"/>
</dbReference>
<dbReference type="SUPFAM" id="SSF102114">
    <property type="entry name" value="Radical SAM enzymes"/>
    <property type="match status" value="1"/>
</dbReference>
<dbReference type="PROSITE" id="PS51918">
    <property type="entry name" value="RADICAL_SAM"/>
    <property type="match status" value="1"/>
</dbReference>
<sequence>MTLRNDWTRDEIQALYDQPFLDLVFQAQQVHREHFSANTIQVSTLLSIKTGKCPEDCKYCSQSAHYDSKLEAEKRIAVDKVISEAKAAKDSGSSRFCMGAAWRNPHERDMPYVLEMVREVKALGLETCMTLGMLNQSQAERLSDAGLDYYNHNLDTSREYYNNIISTRTFDDRLNTLDHVRSAGMKVCSGGIVGLGEQKQDRIGLLHELATLPIHPESVPINMLVPIEGTPLADVEKLDVTEWIRTIAVARIIMPYSYIRLSAGRESLSDSDQALAFMAGANSLFSGDKLLTTPNAGEGKDQVLFAKLGLVAEKPKVSVRAMAVDAMSA</sequence>
<feature type="chain" id="PRO_0000381167" description="Biotin synthase">
    <location>
        <begin position="1"/>
        <end position="329"/>
    </location>
</feature>
<feature type="domain" description="Radical SAM core" evidence="2">
    <location>
        <begin position="38"/>
        <end position="262"/>
    </location>
</feature>
<feature type="binding site" evidence="1">
    <location>
        <position position="53"/>
    </location>
    <ligand>
        <name>[4Fe-4S] cluster</name>
        <dbReference type="ChEBI" id="CHEBI:49883"/>
        <note>4Fe-4S-S-AdoMet</note>
    </ligand>
</feature>
<feature type="binding site" evidence="1">
    <location>
        <position position="57"/>
    </location>
    <ligand>
        <name>[4Fe-4S] cluster</name>
        <dbReference type="ChEBI" id="CHEBI:49883"/>
        <note>4Fe-4S-S-AdoMet</note>
    </ligand>
</feature>
<feature type="binding site" evidence="1">
    <location>
        <position position="60"/>
    </location>
    <ligand>
        <name>[4Fe-4S] cluster</name>
        <dbReference type="ChEBI" id="CHEBI:49883"/>
        <note>4Fe-4S-S-AdoMet</note>
    </ligand>
</feature>
<feature type="binding site" evidence="1">
    <location>
        <position position="97"/>
    </location>
    <ligand>
        <name>[2Fe-2S] cluster</name>
        <dbReference type="ChEBI" id="CHEBI:190135"/>
    </ligand>
</feature>
<feature type="binding site" evidence="1">
    <location>
        <position position="128"/>
    </location>
    <ligand>
        <name>[2Fe-2S] cluster</name>
        <dbReference type="ChEBI" id="CHEBI:190135"/>
    </ligand>
</feature>
<feature type="binding site" evidence="1">
    <location>
        <position position="188"/>
    </location>
    <ligand>
        <name>[2Fe-2S] cluster</name>
        <dbReference type="ChEBI" id="CHEBI:190135"/>
    </ligand>
</feature>
<feature type="binding site" evidence="1">
    <location>
        <position position="260"/>
    </location>
    <ligand>
        <name>[2Fe-2S] cluster</name>
        <dbReference type="ChEBI" id="CHEBI:190135"/>
    </ligand>
</feature>
<keyword id="KW-0001">2Fe-2S</keyword>
<keyword id="KW-0004">4Fe-4S</keyword>
<keyword id="KW-0093">Biotin biosynthesis</keyword>
<keyword id="KW-0408">Iron</keyword>
<keyword id="KW-0411">Iron-sulfur</keyword>
<keyword id="KW-0479">Metal-binding</keyword>
<keyword id="KW-0949">S-adenosyl-L-methionine</keyword>
<keyword id="KW-0808">Transferase</keyword>
<comment type="function">
    <text evidence="1">Catalyzes the conversion of dethiobiotin (DTB) to biotin by the insertion of a sulfur atom into dethiobiotin via a radical-based mechanism.</text>
</comment>
<comment type="catalytic activity">
    <reaction evidence="1">
        <text>(4R,5S)-dethiobiotin + (sulfur carrier)-SH + 2 reduced [2Fe-2S]-[ferredoxin] + 2 S-adenosyl-L-methionine = (sulfur carrier)-H + biotin + 2 5'-deoxyadenosine + 2 L-methionine + 2 oxidized [2Fe-2S]-[ferredoxin]</text>
        <dbReference type="Rhea" id="RHEA:22060"/>
        <dbReference type="Rhea" id="RHEA-COMP:10000"/>
        <dbReference type="Rhea" id="RHEA-COMP:10001"/>
        <dbReference type="Rhea" id="RHEA-COMP:14737"/>
        <dbReference type="Rhea" id="RHEA-COMP:14739"/>
        <dbReference type="ChEBI" id="CHEBI:17319"/>
        <dbReference type="ChEBI" id="CHEBI:29917"/>
        <dbReference type="ChEBI" id="CHEBI:33737"/>
        <dbReference type="ChEBI" id="CHEBI:33738"/>
        <dbReference type="ChEBI" id="CHEBI:57586"/>
        <dbReference type="ChEBI" id="CHEBI:57844"/>
        <dbReference type="ChEBI" id="CHEBI:59789"/>
        <dbReference type="ChEBI" id="CHEBI:64428"/>
        <dbReference type="ChEBI" id="CHEBI:149473"/>
        <dbReference type="EC" id="2.8.1.6"/>
    </reaction>
</comment>
<comment type="cofactor">
    <cofactor evidence="1">
        <name>[4Fe-4S] cluster</name>
        <dbReference type="ChEBI" id="CHEBI:49883"/>
    </cofactor>
    <text evidence="1">Binds 1 [4Fe-4S] cluster. The cluster is coordinated with 3 cysteines and an exchangeable S-adenosyl-L-methionine.</text>
</comment>
<comment type="cofactor">
    <cofactor evidence="1">
        <name>[2Fe-2S] cluster</name>
        <dbReference type="ChEBI" id="CHEBI:190135"/>
    </cofactor>
    <text evidence="1">Binds 1 [2Fe-2S] cluster. The cluster is coordinated with 3 cysteines and 1 arginine.</text>
</comment>
<comment type="pathway">
    <text evidence="1">Cofactor biosynthesis; biotin biosynthesis; biotin from 7,8-diaminononanoate: step 2/2.</text>
</comment>
<comment type="subunit">
    <text evidence="1">Homodimer.</text>
</comment>
<comment type="similarity">
    <text evidence="1">Belongs to the radical SAM superfamily. Biotin synthase family.</text>
</comment>
<comment type="sequence caution" evidence="3">
    <conflict type="erroneous initiation">
        <sequence resource="EMBL-CDS" id="CAG68864"/>
    </conflict>
</comment>
<reference key="1">
    <citation type="journal article" date="2004" name="Nucleic Acids Res.">
        <title>Unique features revealed by the genome sequence of Acinetobacter sp. ADP1, a versatile and naturally transformation competent bacterium.</title>
        <authorList>
            <person name="Barbe V."/>
            <person name="Vallenet D."/>
            <person name="Fonknechten N."/>
            <person name="Kreimeyer A."/>
            <person name="Oztas S."/>
            <person name="Labarre L."/>
            <person name="Cruveiller S."/>
            <person name="Robert C."/>
            <person name="Duprat S."/>
            <person name="Wincker P."/>
            <person name="Ornston L.N."/>
            <person name="Weissenbach J."/>
            <person name="Marliere P."/>
            <person name="Cohen G.N."/>
            <person name="Medigue C."/>
        </authorList>
    </citation>
    <scope>NUCLEOTIDE SEQUENCE [LARGE SCALE GENOMIC DNA]</scope>
    <source>
        <strain>ATCC 33305 / BD413 / ADP1</strain>
    </source>
</reference>
<organism>
    <name type="scientific">Acinetobacter baylyi (strain ATCC 33305 / BD413 / ADP1)</name>
    <dbReference type="NCBI Taxonomy" id="62977"/>
    <lineage>
        <taxon>Bacteria</taxon>
        <taxon>Pseudomonadati</taxon>
        <taxon>Pseudomonadota</taxon>
        <taxon>Gammaproteobacteria</taxon>
        <taxon>Moraxellales</taxon>
        <taxon>Moraxellaceae</taxon>
        <taxon>Acinetobacter</taxon>
    </lineage>
</organism>
<name>BIOB_ACIAD</name>
<protein>
    <recommendedName>
        <fullName evidence="1">Biotin synthase</fullName>
        <ecNumber evidence="1">2.8.1.6</ecNumber>
    </recommendedName>
</protein>
<evidence type="ECO:0000255" key="1">
    <source>
        <dbReference type="HAMAP-Rule" id="MF_01694"/>
    </source>
</evidence>
<evidence type="ECO:0000255" key="2">
    <source>
        <dbReference type="PROSITE-ProRule" id="PRU01266"/>
    </source>
</evidence>
<evidence type="ECO:0000305" key="3"/>
<accession>Q6FAP9</accession>